<accession>P58740</accession>
<feature type="chain" id="PRO_0000151079" description="Undecaprenyl-diphosphatase 1">
    <location>
        <begin position="1"/>
        <end position="268"/>
    </location>
</feature>
<feature type="transmembrane region" description="Helical" evidence="1">
    <location>
        <begin position="5"/>
        <end position="25"/>
    </location>
</feature>
<feature type="transmembrane region" description="Helical" evidence="1">
    <location>
        <begin position="43"/>
        <end position="63"/>
    </location>
</feature>
<feature type="transmembrane region" description="Helical" evidence="1">
    <location>
        <begin position="84"/>
        <end position="104"/>
    </location>
</feature>
<feature type="transmembrane region" description="Helical" evidence="1">
    <location>
        <begin position="107"/>
        <end position="127"/>
    </location>
</feature>
<feature type="transmembrane region" description="Helical" evidence="1">
    <location>
        <begin position="184"/>
        <end position="204"/>
    </location>
</feature>
<feature type="transmembrane region" description="Helical" evidence="1">
    <location>
        <begin position="218"/>
        <end position="238"/>
    </location>
</feature>
<feature type="transmembrane region" description="Helical" evidence="1">
    <location>
        <begin position="247"/>
        <end position="267"/>
    </location>
</feature>
<proteinExistence type="inferred from homology"/>
<organism>
    <name type="scientific">Agrobacterium fabrum (strain C58 / ATCC 33970)</name>
    <name type="common">Agrobacterium tumefaciens (strain C58)</name>
    <dbReference type="NCBI Taxonomy" id="176299"/>
    <lineage>
        <taxon>Bacteria</taxon>
        <taxon>Pseudomonadati</taxon>
        <taxon>Pseudomonadota</taxon>
        <taxon>Alphaproteobacteria</taxon>
        <taxon>Hyphomicrobiales</taxon>
        <taxon>Rhizobiaceae</taxon>
        <taxon>Rhizobium/Agrobacterium group</taxon>
        <taxon>Agrobacterium</taxon>
        <taxon>Agrobacterium tumefaciens complex</taxon>
    </lineage>
</organism>
<keyword id="KW-0046">Antibiotic resistance</keyword>
<keyword id="KW-0997">Cell inner membrane</keyword>
<keyword id="KW-1003">Cell membrane</keyword>
<keyword id="KW-0133">Cell shape</keyword>
<keyword id="KW-0961">Cell wall biogenesis/degradation</keyword>
<keyword id="KW-0378">Hydrolase</keyword>
<keyword id="KW-0472">Membrane</keyword>
<keyword id="KW-0573">Peptidoglycan synthesis</keyword>
<keyword id="KW-1185">Reference proteome</keyword>
<keyword id="KW-0812">Transmembrane</keyword>
<keyword id="KW-1133">Transmembrane helix</keyword>
<name>UPPP1_AGRFC</name>
<gene>
    <name evidence="1" type="primary">uppP1</name>
    <name type="synonym">bacA1</name>
    <name type="synonym">upk1</name>
    <name type="ordered locus">Atu0294</name>
    <name type="ORF">AGR_C_505</name>
</gene>
<reference key="1">
    <citation type="journal article" date="2001" name="Science">
        <title>The genome of the natural genetic engineer Agrobacterium tumefaciens C58.</title>
        <authorList>
            <person name="Wood D.W."/>
            <person name="Setubal J.C."/>
            <person name="Kaul R."/>
            <person name="Monks D.E."/>
            <person name="Kitajima J.P."/>
            <person name="Okura V.K."/>
            <person name="Zhou Y."/>
            <person name="Chen L."/>
            <person name="Wood G.E."/>
            <person name="Almeida N.F. Jr."/>
            <person name="Woo L."/>
            <person name="Chen Y."/>
            <person name="Paulsen I.T."/>
            <person name="Eisen J.A."/>
            <person name="Karp P.D."/>
            <person name="Bovee D. Sr."/>
            <person name="Chapman P."/>
            <person name="Clendenning J."/>
            <person name="Deatherage G."/>
            <person name="Gillet W."/>
            <person name="Grant C."/>
            <person name="Kutyavin T."/>
            <person name="Levy R."/>
            <person name="Li M.-J."/>
            <person name="McClelland E."/>
            <person name="Palmieri A."/>
            <person name="Raymond C."/>
            <person name="Rouse G."/>
            <person name="Saenphimmachak C."/>
            <person name="Wu Z."/>
            <person name="Romero P."/>
            <person name="Gordon D."/>
            <person name="Zhang S."/>
            <person name="Yoo H."/>
            <person name="Tao Y."/>
            <person name="Biddle P."/>
            <person name="Jung M."/>
            <person name="Krespan W."/>
            <person name="Perry M."/>
            <person name="Gordon-Kamm B."/>
            <person name="Liao L."/>
            <person name="Kim S."/>
            <person name="Hendrick C."/>
            <person name="Zhao Z.-Y."/>
            <person name="Dolan M."/>
            <person name="Chumley F."/>
            <person name="Tingey S.V."/>
            <person name="Tomb J.-F."/>
            <person name="Gordon M.P."/>
            <person name="Olson M.V."/>
            <person name="Nester E.W."/>
        </authorList>
    </citation>
    <scope>NUCLEOTIDE SEQUENCE [LARGE SCALE GENOMIC DNA]</scope>
    <source>
        <strain>C58 / ATCC 33970</strain>
    </source>
</reference>
<reference key="2">
    <citation type="journal article" date="2001" name="Science">
        <title>Genome sequence of the plant pathogen and biotechnology agent Agrobacterium tumefaciens C58.</title>
        <authorList>
            <person name="Goodner B."/>
            <person name="Hinkle G."/>
            <person name="Gattung S."/>
            <person name="Miller N."/>
            <person name="Blanchard M."/>
            <person name="Qurollo B."/>
            <person name="Goldman B.S."/>
            <person name="Cao Y."/>
            <person name="Askenazi M."/>
            <person name="Halling C."/>
            <person name="Mullin L."/>
            <person name="Houmiel K."/>
            <person name="Gordon J."/>
            <person name="Vaudin M."/>
            <person name="Iartchouk O."/>
            <person name="Epp A."/>
            <person name="Liu F."/>
            <person name="Wollam C."/>
            <person name="Allinger M."/>
            <person name="Doughty D."/>
            <person name="Scott C."/>
            <person name="Lappas C."/>
            <person name="Markelz B."/>
            <person name="Flanagan C."/>
            <person name="Crowell C."/>
            <person name="Gurson J."/>
            <person name="Lomo C."/>
            <person name="Sear C."/>
            <person name="Strub G."/>
            <person name="Cielo C."/>
            <person name="Slater S."/>
        </authorList>
    </citation>
    <scope>NUCLEOTIDE SEQUENCE [LARGE SCALE GENOMIC DNA]</scope>
    <source>
        <strain>C58 / ATCC 33970</strain>
    </source>
</reference>
<dbReference type="EC" id="3.6.1.27" evidence="1"/>
<dbReference type="EMBL" id="AE007869">
    <property type="protein sequence ID" value="AAK86109.1"/>
    <property type="molecule type" value="Genomic_DNA"/>
</dbReference>
<dbReference type="PIR" id="AF2612">
    <property type="entry name" value="AF2612"/>
</dbReference>
<dbReference type="PIR" id="D97394">
    <property type="entry name" value="D97394"/>
</dbReference>
<dbReference type="RefSeq" id="NP_353324.1">
    <property type="nucleotide sequence ID" value="NC_003062.2"/>
</dbReference>
<dbReference type="RefSeq" id="WP_006310140.1">
    <property type="nucleotide sequence ID" value="NC_003062.2"/>
</dbReference>
<dbReference type="SMR" id="P58740"/>
<dbReference type="STRING" id="176299.Atu0294"/>
<dbReference type="EnsemblBacteria" id="AAK86109">
    <property type="protein sequence ID" value="AAK86109"/>
    <property type="gene ID" value="Atu0294"/>
</dbReference>
<dbReference type="GeneID" id="1132332"/>
<dbReference type="KEGG" id="atu:Atu0294"/>
<dbReference type="PATRIC" id="fig|176299.10.peg.285"/>
<dbReference type="eggNOG" id="COG1968">
    <property type="taxonomic scope" value="Bacteria"/>
</dbReference>
<dbReference type="HOGENOM" id="CLU_060296_2_0_5"/>
<dbReference type="OrthoDB" id="9808289at2"/>
<dbReference type="PhylomeDB" id="P58740"/>
<dbReference type="BioCyc" id="AGRO:ATU0294-MONOMER"/>
<dbReference type="Proteomes" id="UP000000813">
    <property type="component" value="Chromosome circular"/>
</dbReference>
<dbReference type="GO" id="GO:0005886">
    <property type="term" value="C:plasma membrane"/>
    <property type="evidence" value="ECO:0007669"/>
    <property type="project" value="UniProtKB-SubCell"/>
</dbReference>
<dbReference type="GO" id="GO:0050380">
    <property type="term" value="F:undecaprenyl-diphosphatase activity"/>
    <property type="evidence" value="ECO:0007669"/>
    <property type="project" value="UniProtKB-UniRule"/>
</dbReference>
<dbReference type="GO" id="GO:0071555">
    <property type="term" value="P:cell wall organization"/>
    <property type="evidence" value="ECO:0007669"/>
    <property type="project" value="UniProtKB-KW"/>
</dbReference>
<dbReference type="GO" id="GO:0009252">
    <property type="term" value="P:peptidoglycan biosynthetic process"/>
    <property type="evidence" value="ECO:0007669"/>
    <property type="project" value="UniProtKB-KW"/>
</dbReference>
<dbReference type="GO" id="GO:0008360">
    <property type="term" value="P:regulation of cell shape"/>
    <property type="evidence" value="ECO:0007669"/>
    <property type="project" value="UniProtKB-KW"/>
</dbReference>
<dbReference type="GO" id="GO:0046677">
    <property type="term" value="P:response to antibiotic"/>
    <property type="evidence" value="ECO:0007669"/>
    <property type="project" value="UniProtKB-UniRule"/>
</dbReference>
<dbReference type="HAMAP" id="MF_01006">
    <property type="entry name" value="Undec_diphosphatase"/>
    <property type="match status" value="1"/>
</dbReference>
<dbReference type="InterPro" id="IPR003824">
    <property type="entry name" value="UppP"/>
</dbReference>
<dbReference type="NCBIfam" id="NF001389">
    <property type="entry name" value="PRK00281.1-2"/>
    <property type="match status" value="1"/>
</dbReference>
<dbReference type="NCBIfam" id="NF001390">
    <property type="entry name" value="PRK00281.1-4"/>
    <property type="match status" value="1"/>
</dbReference>
<dbReference type="NCBIfam" id="TIGR00753">
    <property type="entry name" value="undec_PP_bacA"/>
    <property type="match status" value="1"/>
</dbReference>
<dbReference type="PANTHER" id="PTHR30622">
    <property type="entry name" value="UNDECAPRENYL-DIPHOSPHATASE"/>
    <property type="match status" value="1"/>
</dbReference>
<dbReference type="PANTHER" id="PTHR30622:SF3">
    <property type="entry name" value="UNDECAPRENYL-DIPHOSPHATASE"/>
    <property type="match status" value="1"/>
</dbReference>
<dbReference type="Pfam" id="PF02673">
    <property type="entry name" value="BacA"/>
    <property type="match status" value="1"/>
</dbReference>
<evidence type="ECO:0000255" key="1">
    <source>
        <dbReference type="HAMAP-Rule" id="MF_01006"/>
    </source>
</evidence>
<protein>
    <recommendedName>
        <fullName evidence="1">Undecaprenyl-diphosphatase 1</fullName>
        <ecNumber evidence="1">3.6.1.27</ecNumber>
    </recommendedName>
    <alternativeName>
        <fullName evidence="1">Bacitracin resistance protein 1</fullName>
    </alternativeName>
    <alternativeName>
        <fullName evidence="1">Undecaprenyl pyrophosphate phosphatase 1</fullName>
    </alternativeName>
</protein>
<sequence length="268" mass="28615">MGDQSIISALLLGIIEGLTEFIPVSSTAHVLLAGHFLGFKSPGNTFAVLIQLGAILAILLVYFQKLVSIAVAMPTSAKARRFVLAVLVAFLPAAVIGALAHDFIKTVLFETPMLICVVLIIGGFILLAVDRMPLKPKYTDIMDYPPSLAFKIGLFQCLAMIPGTSRSGATIVGALLMGTDKRSAAEFSFFLAMPTMLGAFVLDLYKNRDALSFDDSALIAVGFVAAFVSGLFVVRSLLDFVSRRGFAPFAWWRIVIGALGLVALLVIG</sequence>
<comment type="function">
    <text evidence="1">Catalyzes the dephosphorylation of undecaprenyl diphosphate (UPP). Confers resistance to bacitracin.</text>
</comment>
<comment type="catalytic activity">
    <reaction evidence="1">
        <text>di-trans,octa-cis-undecaprenyl diphosphate + H2O = di-trans,octa-cis-undecaprenyl phosphate + phosphate + H(+)</text>
        <dbReference type="Rhea" id="RHEA:28094"/>
        <dbReference type="ChEBI" id="CHEBI:15377"/>
        <dbReference type="ChEBI" id="CHEBI:15378"/>
        <dbReference type="ChEBI" id="CHEBI:43474"/>
        <dbReference type="ChEBI" id="CHEBI:58405"/>
        <dbReference type="ChEBI" id="CHEBI:60392"/>
        <dbReference type="EC" id="3.6.1.27"/>
    </reaction>
</comment>
<comment type="subcellular location">
    <subcellularLocation>
        <location evidence="1">Cell inner membrane</location>
        <topology evidence="1">Multi-pass membrane protein</topology>
    </subcellularLocation>
</comment>
<comment type="miscellaneous">
    <text>Bacitracin is thought to be involved in the inhibition of peptidoglycan synthesis by sequestering undecaprenyl diphosphate, thereby reducing the pool of lipid carrier available.</text>
</comment>
<comment type="similarity">
    <text evidence="1">Belongs to the UppP family.</text>
</comment>